<feature type="chain" id="PRO_0000169958" description="Citrate synthase">
    <location>
        <begin position="1" status="less than"/>
        <end position="411" status="greater than"/>
    </location>
</feature>
<feature type="active site" evidence="1">
    <location>
        <position position="304"/>
    </location>
</feature>
<feature type="active site" evidence="1">
    <location>
        <position position="363"/>
    </location>
</feature>
<feature type="sequence conflict" description="In Ref. 2; AAB49576." evidence="2" ref="2">
    <original>A</original>
    <variation>V</variation>
    <location>
        <position position="290"/>
    </location>
</feature>
<feature type="sequence conflict" description="In Ref. 2; AAB49576." evidence="2" ref="2">
    <original>V</original>
    <variation>A</variation>
    <location>
        <position position="316"/>
    </location>
</feature>
<feature type="sequence conflict" description="In Ref. 2; AAB49576." evidence="2" ref="2">
    <original>FY</original>
    <variation>SH</variation>
    <location>
        <begin position="364"/>
        <end position="365"/>
    </location>
</feature>
<feature type="sequence conflict" description="In Ref. 2; AAB49576." evidence="2" ref="2">
    <original>F</original>
    <variation>S</variation>
    <location>
        <position position="380"/>
    </location>
</feature>
<feature type="non-terminal residue">
    <location>
        <position position="1"/>
    </location>
</feature>
<feature type="non-terminal residue">
    <location>
        <position position="411"/>
    </location>
</feature>
<gene>
    <name type="primary">gltA</name>
</gene>
<reference key="1">
    <citation type="journal article" date="1997" name="Int. J. Syst. Bacteriol.">
        <title>Citrate synthase gene comparison, a new tool for phylogenetic analysis, and its application for the rickettsiae.</title>
        <authorList>
            <person name="Roux V."/>
            <person name="Rydkina E."/>
            <person name="Eremeeva M."/>
            <person name="Raoult D."/>
        </authorList>
    </citation>
    <scope>NUCLEOTIDE SEQUENCE [GENOMIC DNA]</scope>
    <source>
        <strain>Phillips</strain>
    </source>
</reference>
<reference key="2">
    <citation type="submission" date="1995-08" db="EMBL/GenBank/DDBJ databases">
        <authorList>
            <person name="Higgins J.A."/>
            <person name="Radulovic S."/>
            <person name="Schriefer M.E."/>
        </authorList>
    </citation>
    <scope>NUCLEOTIDE SEQUENCE [GENOMIC DNA] OF 262-383</scope>
    <source>
        <strain>JC</strain>
    </source>
</reference>
<name>CISY_RICAU</name>
<comment type="catalytic activity">
    <reaction evidence="1">
        <text>oxaloacetate + acetyl-CoA + H2O = citrate + CoA + H(+)</text>
        <dbReference type="Rhea" id="RHEA:16845"/>
        <dbReference type="ChEBI" id="CHEBI:15377"/>
        <dbReference type="ChEBI" id="CHEBI:15378"/>
        <dbReference type="ChEBI" id="CHEBI:16452"/>
        <dbReference type="ChEBI" id="CHEBI:16947"/>
        <dbReference type="ChEBI" id="CHEBI:57287"/>
        <dbReference type="ChEBI" id="CHEBI:57288"/>
        <dbReference type="EC" id="2.3.3.16"/>
    </reaction>
</comment>
<comment type="pathway">
    <text>Carbohydrate metabolism; tricarboxylic acid cycle; isocitrate from oxaloacetate: step 1/2.</text>
</comment>
<comment type="miscellaneous">
    <text>Citrate synthase is found in nearly all cells capable of oxidative metabolism.</text>
</comment>
<comment type="similarity">
    <text evidence="2">Belongs to the citrate synthase family.</text>
</comment>
<proteinExistence type="inferred from homology"/>
<dbReference type="EC" id="2.3.3.16"/>
<dbReference type="EMBL" id="U59718">
    <property type="protein sequence ID" value="AAB02954.1"/>
    <property type="molecule type" value="Genomic_DNA"/>
</dbReference>
<dbReference type="EMBL" id="U33923">
    <property type="protein sequence ID" value="AAB49576.1"/>
    <property type="molecule type" value="Genomic_DNA"/>
</dbReference>
<dbReference type="SMR" id="P51039"/>
<dbReference type="UniPathway" id="UPA00223">
    <property type="reaction ID" value="UER00717"/>
</dbReference>
<dbReference type="GO" id="GO:0005737">
    <property type="term" value="C:cytoplasm"/>
    <property type="evidence" value="ECO:0007669"/>
    <property type="project" value="InterPro"/>
</dbReference>
<dbReference type="GO" id="GO:0004108">
    <property type="term" value="F:citrate (Si)-synthase activity"/>
    <property type="evidence" value="ECO:0007669"/>
    <property type="project" value="InterPro"/>
</dbReference>
<dbReference type="GO" id="GO:0006099">
    <property type="term" value="P:tricarboxylic acid cycle"/>
    <property type="evidence" value="ECO:0007669"/>
    <property type="project" value="UniProtKB-UniPathway"/>
</dbReference>
<dbReference type="CDD" id="cd06114">
    <property type="entry name" value="EcCS_like"/>
    <property type="match status" value="1"/>
</dbReference>
<dbReference type="FunFam" id="1.10.230.10:FF:000002">
    <property type="entry name" value="Citrate synthase"/>
    <property type="match status" value="1"/>
</dbReference>
<dbReference type="Gene3D" id="2.20.28.60">
    <property type="match status" value="1"/>
</dbReference>
<dbReference type="Gene3D" id="1.10.580.10">
    <property type="entry name" value="Citrate Synthase, domain 1"/>
    <property type="match status" value="1"/>
</dbReference>
<dbReference type="Gene3D" id="1.10.230.10">
    <property type="entry name" value="Cytochrome P450-Terp, domain 2"/>
    <property type="match status" value="1"/>
</dbReference>
<dbReference type="InterPro" id="IPR016142">
    <property type="entry name" value="Citrate_synth-like_lrg_a-sub"/>
</dbReference>
<dbReference type="InterPro" id="IPR016143">
    <property type="entry name" value="Citrate_synth-like_sm_a-sub"/>
</dbReference>
<dbReference type="InterPro" id="IPR002020">
    <property type="entry name" value="Citrate_synthase"/>
</dbReference>
<dbReference type="InterPro" id="IPR019810">
    <property type="entry name" value="Citrate_synthase_AS"/>
</dbReference>
<dbReference type="InterPro" id="IPR024176">
    <property type="entry name" value="Citrate_synthase_bac-typ"/>
</dbReference>
<dbReference type="InterPro" id="IPR036969">
    <property type="entry name" value="Citrate_synthase_sf"/>
</dbReference>
<dbReference type="InterPro" id="IPR010953">
    <property type="entry name" value="Citrate_synthase_typ-I"/>
</dbReference>
<dbReference type="NCBIfam" id="TIGR01798">
    <property type="entry name" value="cit_synth_I"/>
    <property type="match status" value="1"/>
</dbReference>
<dbReference type="NCBIfam" id="NF004126">
    <property type="entry name" value="PRK05614.1"/>
    <property type="match status" value="1"/>
</dbReference>
<dbReference type="PANTHER" id="PTHR42871">
    <property type="entry name" value="CITRATE SYNTHASE"/>
    <property type="match status" value="1"/>
</dbReference>
<dbReference type="PANTHER" id="PTHR42871:SF1">
    <property type="entry name" value="CITRATE SYNTHASE"/>
    <property type="match status" value="1"/>
</dbReference>
<dbReference type="Pfam" id="PF00285">
    <property type="entry name" value="Citrate_synt"/>
    <property type="match status" value="1"/>
</dbReference>
<dbReference type="PIRSF" id="PIRSF001369">
    <property type="entry name" value="Citrate_synth"/>
    <property type="match status" value="1"/>
</dbReference>
<dbReference type="PRINTS" id="PR00143">
    <property type="entry name" value="CITRTSNTHASE"/>
</dbReference>
<dbReference type="SUPFAM" id="SSF48256">
    <property type="entry name" value="Citrate synthase"/>
    <property type="match status" value="1"/>
</dbReference>
<dbReference type="PROSITE" id="PS00480">
    <property type="entry name" value="CITRATE_SYNTHASE"/>
    <property type="match status" value="1"/>
</dbReference>
<accession>P51039</accession>
<accession>Q59731</accession>
<keyword id="KW-0808">Transferase</keyword>
<keyword id="KW-0816">Tricarboxylic acid cycle</keyword>
<organism>
    <name type="scientific">Rickettsia australis</name>
    <dbReference type="NCBI Taxonomy" id="787"/>
    <lineage>
        <taxon>Bacteria</taxon>
        <taxon>Pseudomonadati</taxon>
        <taxon>Pseudomonadota</taxon>
        <taxon>Alphaproteobacteria</taxon>
        <taxon>Rickettsiales</taxon>
        <taxon>Rickettsiaceae</taxon>
        <taxon>Rickettsieae</taxon>
        <taxon>Rickettsia</taxon>
        <taxon>spotted fever group</taxon>
    </lineage>
</organism>
<evidence type="ECO:0000255" key="1">
    <source>
        <dbReference type="PROSITE-ProRule" id="PRU10117"/>
    </source>
</evidence>
<evidence type="ECO:0000305" key="2"/>
<sequence length="411" mass="46112">DSEFAELKIRGKIFKLPILKASIGEDVIDISRVSAEADCFTYDPGFMSTASCQSTITYIDGDKGILRHRGYNIKDLAEKSDFLEVAYLLIYGELPTIEQYNNFTTQVAHHSLVNERLHYLFQAFCSSSHPMAIMLAAVGSLSAFYPDLLNFKEADYELTAIRMIAKIPTIAAMSYKYSIGQPFIYPDNSLDFTENFLHMMFATPCTKYKVNPIIKNALNKIFILHADHEQNASTSTVRIAGSSGANAFACISTGIASLWGPAHGGANEAVINMLKEIGSSENIPKFIAKAKDKNDPFRLMGFGHRVYKNYDPRAAVLKETCKAVLKELGQLENNPLLQIAIELEAIALKDEYFIERKLYPNVDFYSGIIYKAMGIPSQMFTVLFAIARTVGWMAQWKEMHEDPEQKISRPR</sequence>
<protein>
    <recommendedName>
        <fullName>Citrate synthase</fullName>
        <ecNumber>2.3.3.16</ecNumber>
    </recommendedName>
</protein>